<dbReference type="EMBL" id="AL583920">
    <property type="protein sequence ID" value="CAC31480.1"/>
    <property type="molecule type" value="Genomic_DNA"/>
</dbReference>
<dbReference type="PIR" id="E87046">
    <property type="entry name" value="E87046"/>
</dbReference>
<dbReference type="RefSeq" id="NP_301805.1">
    <property type="nucleotide sequence ID" value="NC_002677.1"/>
</dbReference>
<dbReference type="RefSeq" id="WP_010908129.1">
    <property type="nucleotide sequence ID" value="NC_002677.1"/>
</dbReference>
<dbReference type="STRING" id="272631.gene:17574925"/>
<dbReference type="KEGG" id="mle:ML1099"/>
<dbReference type="PATRIC" id="fig|272631.5.peg.1969"/>
<dbReference type="Leproma" id="ML1099"/>
<dbReference type="eggNOG" id="ENOG5031HE2">
    <property type="taxonomic scope" value="Bacteria"/>
</dbReference>
<dbReference type="HOGENOM" id="CLU_1364969_0_0_11"/>
<dbReference type="OrthoDB" id="4762129at2"/>
<dbReference type="Proteomes" id="UP000000806">
    <property type="component" value="Chromosome"/>
</dbReference>
<dbReference type="GO" id="GO:0005886">
    <property type="term" value="C:plasma membrane"/>
    <property type="evidence" value="ECO:0007669"/>
    <property type="project" value="UniProtKB-SubCell"/>
</dbReference>
<dbReference type="InterPro" id="IPR025971">
    <property type="entry name" value="LppP/LprE"/>
</dbReference>
<dbReference type="Pfam" id="PF14041">
    <property type="entry name" value="Lipoprotein_21"/>
    <property type="match status" value="1"/>
</dbReference>
<dbReference type="PROSITE" id="PS51257">
    <property type="entry name" value="PROKAR_LIPOPROTEIN"/>
    <property type="match status" value="1"/>
</dbReference>
<gene>
    <name type="primary">lprE</name>
    <name type="ordered locus">ML1099</name>
</gene>
<reference key="1">
    <citation type="journal article" date="2001" name="Nature">
        <title>Massive gene decay in the leprosy bacillus.</title>
        <authorList>
            <person name="Cole S.T."/>
            <person name="Eiglmeier K."/>
            <person name="Parkhill J."/>
            <person name="James K.D."/>
            <person name="Thomson N.R."/>
            <person name="Wheeler P.R."/>
            <person name="Honore N."/>
            <person name="Garnier T."/>
            <person name="Churcher C.M."/>
            <person name="Harris D.E."/>
            <person name="Mungall K.L."/>
            <person name="Basham D."/>
            <person name="Brown D."/>
            <person name="Chillingworth T."/>
            <person name="Connor R."/>
            <person name="Davies R.M."/>
            <person name="Devlin K."/>
            <person name="Duthoy S."/>
            <person name="Feltwell T."/>
            <person name="Fraser A."/>
            <person name="Hamlin N."/>
            <person name="Holroyd S."/>
            <person name="Hornsby T."/>
            <person name="Jagels K."/>
            <person name="Lacroix C."/>
            <person name="Maclean J."/>
            <person name="Moule S."/>
            <person name="Murphy L.D."/>
            <person name="Oliver K."/>
            <person name="Quail M.A."/>
            <person name="Rajandream M.A."/>
            <person name="Rutherford K.M."/>
            <person name="Rutter S."/>
            <person name="Seeger K."/>
            <person name="Simon S."/>
            <person name="Simmonds M."/>
            <person name="Skelton J."/>
            <person name="Squares R."/>
            <person name="Squares S."/>
            <person name="Stevens K."/>
            <person name="Taylor K."/>
            <person name="Whitehead S."/>
            <person name="Woodward J.R."/>
            <person name="Barrell B.G."/>
        </authorList>
    </citation>
    <scope>NUCLEOTIDE SEQUENCE [LARGE SCALE GENOMIC DNA]</scope>
    <source>
        <strain>TN</strain>
    </source>
</reference>
<accession>Q9CC94</accession>
<organism>
    <name type="scientific">Mycobacterium leprae (strain TN)</name>
    <dbReference type="NCBI Taxonomy" id="272631"/>
    <lineage>
        <taxon>Bacteria</taxon>
        <taxon>Bacillati</taxon>
        <taxon>Actinomycetota</taxon>
        <taxon>Actinomycetes</taxon>
        <taxon>Mycobacteriales</taxon>
        <taxon>Mycobacteriaceae</taxon>
        <taxon>Mycobacterium</taxon>
    </lineage>
</organism>
<keyword id="KW-1003">Cell membrane</keyword>
<keyword id="KW-0449">Lipoprotein</keyword>
<keyword id="KW-0472">Membrane</keyword>
<keyword id="KW-0564">Palmitate</keyword>
<keyword id="KW-1185">Reference proteome</keyword>
<keyword id="KW-0732">Signal</keyword>
<evidence type="ECO:0000255" key="1">
    <source>
        <dbReference type="PROSITE-ProRule" id="PRU00303"/>
    </source>
</evidence>
<sequence>MRDVWSLPCRKSLLGVAAVVLVSGTLTGCSSGDSTVAKTPVPPSTTTGTISTIISSAPSPPFATAAPPTSNTPPDDPCAVNLASPTIARVVSELPRDPRSAQPWNPEPLAGNYNECAQLSAVIIKANTNAVNPTTRAVLFHLGRFIPQGVPDTYGFNGIDPAQTTGDTVALTYPSSIDGLATAVRFHWNGNAVELISNIAGG</sequence>
<feature type="signal peptide" evidence="1">
    <location>
        <begin position="1"/>
        <end position="28"/>
    </location>
</feature>
<feature type="chain" id="PRO_0000018140" description="Putative lipoprotein LprE">
    <location>
        <begin position="29"/>
        <end position="202"/>
    </location>
</feature>
<feature type="lipid moiety-binding region" description="N-palmitoyl cysteine" evidence="1">
    <location>
        <position position="29"/>
    </location>
</feature>
<feature type="lipid moiety-binding region" description="S-diacylglycerol cysteine" evidence="1">
    <location>
        <position position="29"/>
    </location>
</feature>
<protein>
    <recommendedName>
        <fullName>Putative lipoprotein LprE</fullName>
    </recommendedName>
</protein>
<comment type="subcellular location">
    <subcellularLocation>
        <location evidence="1">Cell membrane</location>
        <topology evidence="1">Lipid-anchor</topology>
    </subcellularLocation>
</comment>
<name>LPRE_MYCLE</name>
<proteinExistence type="inferred from homology"/>